<gene>
    <name type="primary">SULT1B1</name>
</gene>
<organism>
    <name type="scientific">Bos taurus</name>
    <name type="common">Bovine</name>
    <dbReference type="NCBI Taxonomy" id="9913"/>
    <lineage>
        <taxon>Eukaryota</taxon>
        <taxon>Metazoa</taxon>
        <taxon>Chordata</taxon>
        <taxon>Craniata</taxon>
        <taxon>Vertebrata</taxon>
        <taxon>Euteleostomi</taxon>
        <taxon>Mammalia</taxon>
        <taxon>Eutheria</taxon>
        <taxon>Laurasiatheria</taxon>
        <taxon>Artiodactyla</taxon>
        <taxon>Ruminantia</taxon>
        <taxon>Pecora</taxon>
        <taxon>Bovidae</taxon>
        <taxon>Bovinae</taxon>
        <taxon>Bos</taxon>
    </lineage>
</organism>
<keyword id="KW-0963">Cytoplasm</keyword>
<keyword id="KW-1185">Reference proteome</keyword>
<keyword id="KW-0808">Transferase</keyword>
<evidence type="ECO:0000250" key="1"/>
<evidence type="ECO:0000250" key="2">
    <source>
        <dbReference type="UniProtKB" id="O43704"/>
    </source>
</evidence>
<evidence type="ECO:0000269" key="3">
    <source>
    </source>
</evidence>
<evidence type="ECO:0000305" key="4"/>
<feature type="chain" id="PRO_0000284968" description="Sulfotransferase 1B1">
    <location>
        <begin position="1"/>
        <end position="296"/>
    </location>
</feature>
<feature type="active site" description="Proton acceptor" evidence="1">
    <location>
        <position position="109"/>
    </location>
</feature>
<feature type="binding site" evidence="2">
    <location>
        <begin position="48"/>
        <end position="53"/>
    </location>
    <ligand>
        <name>3'-phosphoadenylyl sulfate</name>
        <dbReference type="ChEBI" id="CHEBI:58339"/>
    </ligand>
</feature>
<feature type="binding site" evidence="1">
    <location>
        <begin position="107"/>
        <end position="109"/>
    </location>
    <ligand>
        <name>substrate</name>
    </ligand>
</feature>
<feature type="binding site" evidence="2">
    <location>
        <position position="131"/>
    </location>
    <ligand>
        <name>3'-phosphoadenylyl sulfate</name>
        <dbReference type="ChEBI" id="CHEBI:58339"/>
    </ligand>
</feature>
<feature type="binding site" evidence="2">
    <location>
        <position position="139"/>
    </location>
    <ligand>
        <name>3'-phosphoadenylyl sulfate</name>
        <dbReference type="ChEBI" id="CHEBI:58339"/>
    </ligand>
</feature>
<feature type="binding site" evidence="2">
    <location>
        <position position="194"/>
    </location>
    <ligand>
        <name>3'-phosphoadenylyl sulfate</name>
        <dbReference type="ChEBI" id="CHEBI:58339"/>
    </ligand>
</feature>
<feature type="binding site" evidence="2">
    <location>
        <begin position="228"/>
        <end position="233"/>
    </location>
    <ligand>
        <name>3'-phosphoadenylyl sulfate</name>
        <dbReference type="ChEBI" id="CHEBI:58339"/>
    </ligand>
</feature>
<feature type="binding site" evidence="2">
    <location>
        <begin position="258"/>
        <end position="260"/>
    </location>
    <ligand>
        <name>3'-phosphoadenylyl sulfate</name>
        <dbReference type="ChEBI" id="CHEBI:58339"/>
    </ligand>
</feature>
<protein>
    <recommendedName>
        <fullName>Sulfotransferase 1B1</fullName>
        <shortName>ST1B1</shortName>
        <ecNumber evidence="3">2.8.2.1</ecNumber>
    </recommendedName>
    <alternativeName>
        <fullName>Sulfotransferase family cytosolic 1B member 1</fullName>
    </alternativeName>
</protein>
<dbReference type="EC" id="2.8.2.1" evidence="3"/>
<dbReference type="EMBL" id="BC102208">
    <property type="protein sequence ID" value="AAI02209.1"/>
    <property type="molecule type" value="mRNA"/>
</dbReference>
<dbReference type="RefSeq" id="NP_001069291.1">
    <property type="nucleotide sequence ID" value="NM_001075823.2"/>
</dbReference>
<dbReference type="RefSeq" id="XP_005208096.1">
    <property type="nucleotide sequence ID" value="XM_005208039.4"/>
</dbReference>
<dbReference type="RefSeq" id="XP_005208098.1">
    <property type="nucleotide sequence ID" value="XM_005208041.3"/>
</dbReference>
<dbReference type="RefSeq" id="XP_010804466.1">
    <property type="nucleotide sequence ID" value="XM_010806164.4"/>
</dbReference>
<dbReference type="RefSeq" id="XP_015327144.1">
    <property type="nucleotide sequence ID" value="XM_015471658.3"/>
</dbReference>
<dbReference type="RefSeq" id="XP_059743501.1">
    <property type="nucleotide sequence ID" value="XM_059887518.1"/>
</dbReference>
<dbReference type="SMR" id="Q3T0Y3"/>
<dbReference type="FunCoup" id="Q3T0Y3">
    <property type="interactions" value="29"/>
</dbReference>
<dbReference type="STRING" id="9913.ENSBTAP00000001650"/>
<dbReference type="PaxDb" id="9913-ENSBTAP00000001650"/>
<dbReference type="PeptideAtlas" id="Q3T0Y3"/>
<dbReference type="Ensembl" id="ENSBTAT00000001650.7">
    <property type="protein sequence ID" value="ENSBTAP00000001650.5"/>
    <property type="gene ID" value="ENSBTAG00000001249.7"/>
</dbReference>
<dbReference type="GeneID" id="521920"/>
<dbReference type="KEGG" id="bta:521920"/>
<dbReference type="CTD" id="27284"/>
<dbReference type="VEuPathDB" id="HostDB:ENSBTAG00000001249"/>
<dbReference type="VGNC" id="VGNC:53777">
    <property type="gene designation" value="SULT1B1"/>
</dbReference>
<dbReference type="eggNOG" id="KOG1584">
    <property type="taxonomic scope" value="Eukaryota"/>
</dbReference>
<dbReference type="GeneTree" id="ENSGT00940000161848"/>
<dbReference type="HOGENOM" id="CLU_027239_1_2_1"/>
<dbReference type="InParanoid" id="Q3T0Y3"/>
<dbReference type="OMA" id="IIYLCRE"/>
<dbReference type="OrthoDB" id="205623at2759"/>
<dbReference type="TreeFam" id="TF321745"/>
<dbReference type="Reactome" id="R-BTA-156584">
    <property type="pathway name" value="Cytosolic sulfonation of small molecules"/>
</dbReference>
<dbReference type="Proteomes" id="UP000009136">
    <property type="component" value="Chromosome 6"/>
</dbReference>
<dbReference type="Bgee" id="ENSBTAG00000001249">
    <property type="expression patterns" value="Expressed in rumen papilla and 82 other cell types or tissues"/>
</dbReference>
<dbReference type="GO" id="GO:0005737">
    <property type="term" value="C:cytoplasm"/>
    <property type="evidence" value="ECO:0000314"/>
    <property type="project" value="UniProtKB"/>
</dbReference>
<dbReference type="GO" id="GO:0005829">
    <property type="term" value="C:cytosol"/>
    <property type="evidence" value="ECO:0007669"/>
    <property type="project" value="UniProtKB-SubCell"/>
</dbReference>
<dbReference type="GO" id="GO:0004062">
    <property type="term" value="F:aryl sulfotransferase activity"/>
    <property type="evidence" value="ECO:0000314"/>
    <property type="project" value="UniProtKB"/>
</dbReference>
<dbReference type="GO" id="GO:0050427">
    <property type="term" value="P:3'-phosphoadenosine 5'-phosphosulfate metabolic process"/>
    <property type="evidence" value="ECO:0007669"/>
    <property type="project" value="Ensembl"/>
</dbReference>
<dbReference type="GO" id="GO:0030855">
    <property type="term" value="P:epithelial cell differentiation"/>
    <property type="evidence" value="ECO:0007669"/>
    <property type="project" value="Ensembl"/>
</dbReference>
<dbReference type="GO" id="GO:0006068">
    <property type="term" value="P:ethanol catabolic process"/>
    <property type="evidence" value="ECO:0007669"/>
    <property type="project" value="Ensembl"/>
</dbReference>
<dbReference type="GO" id="GO:0009812">
    <property type="term" value="P:flavonoid metabolic process"/>
    <property type="evidence" value="ECO:0007669"/>
    <property type="project" value="Ensembl"/>
</dbReference>
<dbReference type="GO" id="GO:0051923">
    <property type="term" value="P:sulfation"/>
    <property type="evidence" value="ECO:0000314"/>
    <property type="project" value="UniProtKB"/>
</dbReference>
<dbReference type="GO" id="GO:0042403">
    <property type="term" value="P:thyroid hormone metabolic process"/>
    <property type="evidence" value="ECO:0000250"/>
    <property type="project" value="UniProtKB"/>
</dbReference>
<dbReference type="GO" id="GO:0006805">
    <property type="term" value="P:xenobiotic metabolic process"/>
    <property type="evidence" value="ECO:0007669"/>
    <property type="project" value="Ensembl"/>
</dbReference>
<dbReference type="FunFam" id="3.40.50.300:FF:000433">
    <property type="entry name" value="Estrogen sulfotransferase"/>
    <property type="match status" value="1"/>
</dbReference>
<dbReference type="Gene3D" id="3.40.50.300">
    <property type="entry name" value="P-loop containing nucleotide triphosphate hydrolases"/>
    <property type="match status" value="1"/>
</dbReference>
<dbReference type="InterPro" id="IPR027417">
    <property type="entry name" value="P-loop_NTPase"/>
</dbReference>
<dbReference type="InterPro" id="IPR000863">
    <property type="entry name" value="Sulfotransferase_dom"/>
</dbReference>
<dbReference type="PANTHER" id="PTHR11783">
    <property type="entry name" value="SULFOTRANSFERASE SULT"/>
    <property type="match status" value="1"/>
</dbReference>
<dbReference type="Pfam" id="PF00685">
    <property type="entry name" value="Sulfotransfer_1"/>
    <property type="match status" value="1"/>
</dbReference>
<dbReference type="SUPFAM" id="SSF52540">
    <property type="entry name" value="P-loop containing nucleoside triphosphate hydrolases"/>
    <property type="match status" value="1"/>
</dbReference>
<comment type="function">
    <text evidence="2 3">Sulfotransferase that utilizes 3'-phospho-5'-adenylyl sulfate (PAPS) as sulfonate donor to catalyze the sulfate conjugation of dopamine small phenols such as 1-naphthol and 4-nitrophenol (PubMed:25539458). Also catalyzes the sulfate conjugation of dopamine and thyroid hormones, including 3,3'-diiodothyronine, triidothyronine (T3) and reverse triiodothyronine (rT3) (By similarity). May play a role in gut microbiota-host metabolic interaction. O-sulfonates 4-ethylphenol (4-EP), a dietary tyrosine-derived metabolite produced by gut bacteria. The product 4-EPS crosses the blood-brain barrier and may negatively regulate oligodendrocyte maturation and myelination, affecting the functional connectivity of different brain regions associated with the limbic system.</text>
</comment>
<comment type="catalytic activity">
    <reaction evidence="3">
        <text>a phenol + 3'-phosphoadenylyl sulfate = an aryl sulfate + adenosine 3',5'-bisphosphate + H(+)</text>
        <dbReference type="Rhea" id="RHEA:12164"/>
        <dbReference type="ChEBI" id="CHEBI:15378"/>
        <dbReference type="ChEBI" id="CHEBI:33853"/>
        <dbReference type="ChEBI" id="CHEBI:58339"/>
        <dbReference type="ChEBI" id="CHEBI:58343"/>
        <dbReference type="ChEBI" id="CHEBI:140317"/>
        <dbReference type="EC" id="2.8.2.1"/>
    </reaction>
    <physiologicalReaction direction="left-to-right" evidence="3">
        <dbReference type="Rhea" id="RHEA:12165"/>
    </physiologicalReaction>
</comment>
<comment type="catalytic activity">
    <reaction evidence="2">
        <text>3,3',5-triiodo-L-thyronine + 3'-phosphoadenylyl sulfate = 3,3',5-triiodo-L-thyronine sulfate + adenosine 3',5'-bisphosphate + H(+)</text>
        <dbReference type="Rhea" id="RHEA:67876"/>
        <dbReference type="ChEBI" id="CHEBI:15378"/>
        <dbReference type="ChEBI" id="CHEBI:58339"/>
        <dbReference type="ChEBI" id="CHEBI:58343"/>
        <dbReference type="ChEBI" id="CHEBI:176511"/>
        <dbReference type="ChEBI" id="CHEBI:533015"/>
    </reaction>
    <physiologicalReaction direction="left-to-right" evidence="2">
        <dbReference type="Rhea" id="RHEA:67877"/>
    </physiologicalReaction>
</comment>
<comment type="catalytic activity">
    <reaction evidence="2">
        <text>3,3',5'-triiodo-L-thyronine + 3'-phosphoadenylyl sulfate = 3,3',5'-triiodo-L-thyronine sulfate + adenosine 3',5'-bisphosphate + H(+)</text>
        <dbReference type="Rhea" id="RHEA:67888"/>
        <dbReference type="ChEBI" id="CHEBI:15378"/>
        <dbReference type="ChEBI" id="CHEBI:57261"/>
        <dbReference type="ChEBI" id="CHEBI:58339"/>
        <dbReference type="ChEBI" id="CHEBI:58343"/>
        <dbReference type="ChEBI" id="CHEBI:176513"/>
    </reaction>
    <physiologicalReaction direction="left-to-right" evidence="2">
        <dbReference type="Rhea" id="RHEA:67889"/>
    </physiologicalReaction>
</comment>
<comment type="catalytic activity">
    <reaction evidence="2">
        <text>3,3'-diiodo-L-thyronine + 3'-phosphoadenylyl sulfate = 3,3'-diiodo-L-thyronine sulfate + adenosine 3',5'-bisphosphate + H(+)</text>
        <dbReference type="Rhea" id="RHEA:67892"/>
        <dbReference type="ChEBI" id="CHEBI:15378"/>
        <dbReference type="ChEBI" id="CHEBI:58339"/>
        <dbReference type="ChEBI" id="CHEBI:58343"/>
        <dbReference type="ChEBI" id="CHEBI:176514"/>
        <dbReference type="ChEBI" id="CHEBI:176515"/>
    </reaction>
    <physiologicalReaction direction="left-to-right" evidence="2">
        <dbReference type="Rhea" id="RHEA:67893"/>
    </physiologicalReaction>
</comment>
<comment type="catalytic activity">
    <reaction evidence="2">
        <text>dopamine + 3'-phosphoadenylyl sulfate = dopamine 3-O-sulfate + adenosine 3',5'-bisphosphate + H(+)</text>
        <dbReference type="Rhea" id="RHEA:67880"/>
        <dbReference type="ChEBI" id="CHEBI:15378"/>
        <dbReference type="ChEBI" id="CHEBI:58339"/>
        <dbReference type="ChEBI" id="CHEBI:58343"/>
        <dbReference type="ChEBI" id="CHEBI:59905"/>
        <dbReference type="ChEBI" id="CHEBI:133524"/>
    </reaction>
    <physiologicalReaction direction="left-to-right" evidence="2">
        <dbReference type="Rhea" id="RHEA:67881"/>
    </physiologicalReaction>
</comment>
<comment type="catalytic activity">
    <reaction evidence="2">
        <text>dopamine + 3'-phosphoadenylyl sulfate = dopamine 4-O-sulfate + adenosine 3',5'-bisphosphate + H(+)</text>
        <dbReference type="Rhea" id="RHEA:67884"/>
        <dbReference type="ChEBI" id="CHEBI:15378"/>
        <dbReference type="ChEBI" id="CHEBI:58339"/>
        <dbReference type="ChEBI" id="CHEBI:58343"/>
        <dbReference type="ChEBI" id="CHEBI:59905"/>
        <dbReference type="ChEBI" id="CHEBI:133529"/>
    </reaction>
    <physiologicalReaction direction="left-to-right" evidence="2">
        <dbReference type="Rhea" id="RHEA:67885"/>
    </physiologicalReaction>
</comment>
<comment type="catalytic activity">
    <reaction evidence="2">
        <text>4-ethylphenol + 3'-phosphoadenylyl sulfate = 4-ethylphenyl sulfate + adenosine 3',5'-bisphosphate + H(+)</text>
        <dbReference type="Rhea" id="RHEA:70607"/>
        <dbReference type="ChEBI" id="CHEBI:15378"/>
        <dbReference type="ChEBI" id="CHEBI:49584"/>
        <dbReference type="ChEBI" id="CHEBI:58339"/>
        <dbReference type="ChEBI" id="CHEBI:58343"/>
        <dbReference type="ChEBI" id="CHEBI:133681"/>
    </reaction>
    <physiologicalReaction direction="left-to-right" evidence="2">
        <dbReference type="Rhea" id="RHEA:70608"/>
    </physiologicalReaction>
</comment>
<comment type="biophysicochemical properties">
    <kinetics>
        <KM evidence="3">31 uM for 4-nitrophenol</KM>
        <Vmax evidence="3">3.5 umol/min/mg enzyme with 4-nitropenol as substrate</Vmax>
    </kinetics>
</comment>
<comment type="subcellular location">
    <subcellularLocation>
        <location evidence="3">Cytoplasm</location>
        <location evidence="3">Cytosol</location>
    </subcellularLocation>
</comment>
<comment type="tissue specificity">
    <text evidence="3">Expressed in liver.</text>
</comment>
<comment type="similarity">
    <text evidence="4">Belongs to the sulfotransferase 1 family.</text>
</comment>
<sequence length="296" mass="34674">MTSPKDVLRKNLKLIHGCPITYAFANNWEKIEQFQSRPDDIMIVTYPKSGTTWISEIVDMVLHDGDVEKCKRDVITAKVPMLELALPGLRTSGLEQLEKNPSPRVVKTHLPIDLIPKSFWENNCKIIYLARNAKDVAVSFYHFDLMNNLQPLPGTWGEYLEKFLTGNVAYGSWFNHVKSWWKKKEGHPILFLFYEDMKENPKQEIKKVVRFLEKNLDDEILDKIIYHTSFEMMKDNPLVNYTHLPSEVMDHSKSSFMRKGIAGDWKNYFTVAQNEKFDAIYKKEMSETELQFRTEI</sequence>
<name>ST1B1_BOVIN</name>
<proteinExistence type="evidence at protein level"/>
<reference key="1">
    <citation type="submission" date="2005-08" db="EMBL/GenBank/DDBJ databases">
        <authorList>
            <consortium name="NIH - Mammalian Gene Collection (MGC) project"/>
        </authorList>
    </citation>
    <scope>NUCLEOTIDE SEQUENCE [LARGE SCALE MRNA]</scope>
    <source>
        <strain>Crossbred X Angus</strain>
        <tissue>Ileum</tissue>
    </source>
</reference>
<reference key="2">
    <citation type="journal article" date="2015" name="Xenobiotica">
        <title>Characterization of bovine phenol sulfotransferases: evidence of a major role for SULT1B1 in the liver.</title>
        <authorList>
            <person name="Choughule K.V."/>
            <person name="Locuson C.W."/>
            <person name="Coughtrie M.W."/>
        </authorList>
    </citation>
    <scope>FUNCTION</scope>
    <scope>CATALYTIC ACTIVITY</scope>
    <scope>BIOPHYSICOCHEMICAL PROPERTIES</scope>
    <scope>SUBCELLULAR LOCATION</scope>
    <scope>TISSUE SPECIFICITY</scope>
</reference>
<accession>Q3T0Y3</accession>